<sequence>MSTPANYTRVPLCEPEELPDDIQKENEYGTLDSPGHLYQVKSRHGKPLPEPVVDTPPYYISLLTYLNYLILIILGHVHDFLGMTFQKNKHLDLLEHDGLAPWFSNFESFYVRRIKMRIDDCFSRPTTGVPGRFIRCIDRISHNINEYFTYSGAVYPCMNLSSYNYLGFAQSKGQCTDAALESVDKYSIQSGGPRAQIGTTDLHIKAEKLVARFIGKEDALVFSMGYGTNANLFNAFLDKKCLVISDELNHTSIRTGVRLSGAAVRTFKHGDMVGLEKLIREQIVLGQPKTNRPWKKILICAEGLFSMEGTLCNLPKLVELKKKYKCYLFIDEAHSIGAMGPTGRGVCEIFGVDPKDVDILMGTFTKSFGAAGGYIAADQWIIDRLRLDLTTVSYSESMPAPVLAQTISSLQTISGEICPGQGTERLQRIAFNSRYLRLALQRLGFIVYGVADSPVIPLLLYCPSKMPAFSRMMLQRRIAVVVVAYPATPLIESRVRFCMSASLTKEDIDYLLRHVSEVGDKLNLKSNSGKSSYDGKRQRWDIEEVIRRTPEDCKDDKYFVN</sequence>
<name>LCB2_YEAST</name>
<evidence type="ECO:0000250" key="1"/>
<evidence type="ECO:0000255" key="2"/>
<evidence type="ECO:0000269" key="3">
    <source>
    </source>
</evidence>
<evidence type="ECO:0000269" key="4">
    <source>
    </source>
</evidence>
<evidence type="ECO:0000269" key="5">
    <source>
    </source>
</evidence>
<evidence type="ECO:0000269" key="6">
    <source>
    </source>
</evidence>
<evidence type="ECO:0000269" key="7">
    <source>
    </source>
</evidence>
<evidence type="ECO:0000269" key="8">
    <source>
    </source>
</evidence>
<evidence type="ECO:0000269" key="9">
    <source>
    </source>
</evidence>
<evidence type="ECO:0000305" key="10"/>
<dbReference type="EC" id="2.3.1.50"/>
<dbReference type="EMBL" id="L33931">
    <property type="protein sequence ID" value="AAA53669.1"/>
    <property type="molecule type" value="Genomic_DNA"/>
</dbReference>
<dbReference type="EMBL" id="M95669">
    <property type="protein sequence ID" value="AAA34740.1"/>
    <property type="molecule type" value="Genomic_DNA"/>
</dbReference>
<dbReference type="EMBL" id="X84162">
    <property type="protein sequence ID" value="CAA58978.1"/>
    <property type="molecule type" value="Genomic_DNA"/>
</dbReference>
<dbReference type="EMBL" id="Z49209">
    <property type="protein sequence ID" value="CAA89091.1"/>
    <property type="molecule type" value="Genomic_DNA"/>
</dbReference>
<dbReference type="EMBL" id="Z74358">
    <property type="protein sequence ID" value="CAA98880.1"/>
    <property type="molecule type" value="Genomic_DNA"/>
</dbReference>
<dbReference type="EMBL" id="AY723771">
    <property type="protein sequence ID" value="AAU09688.1"/>
    <property type="molecule type" value="Genomic_DNA"/>
</dbReference>
<dbReference type="EMBL" id="BK006938">
    <property type="protein sequence ID" value="DAA11908.1"/>
    <property type="molecule type" value="Genomic_DNA"/>
</dbReference>
<dbReference type="PIR" id="S54046">
    <property type="entry name" value="S54046"/>
</dbReference>
<dbReference type="RefSeq" id="NP_010347.1">
    <property type="nucleotide sequence ID" value="NM_001180370.1"/>
</dbReference>
<dbReference type="PDB" id="8C80">
    <property type="method" value="EM"/>
    <property type="resolution" value="3.40 A"/>
    <property type="chains" value="C=1-561"/>
</dbReference>
<dbReference type="PDB" id="8C81">
    <property type="method" value="EM"/>
    <property type="resolution" value="3.30 A"/>
    <property type="chains" value="C=1-561"/>
</dbReference>
<dbReference type="PDB" id="8C82">
    <property type="method" value="EM"/>
    <property type="resolution" value="3.40 A"/>
    <property type="chains" value="C/G=1-561"/>
</dbReference>
<dbReference type="PDB" id="8IAJ">
    <property type="method" value="EM"/>
    <property type="resolution" value="3.10 A"/>
    <property type="chains" value="B/F=1-561"/>
</dbReference>
<dbReference type="PDB" id="8IAK">
    <property type="method" value="EM"/>
    <property type="resolution" value="3.10 A"/>
    <property type="chains" value="B/F=1-561"/>
</dbReference>
<dbReference type="PDB" id="8IAM">
    <property type="method" value="EM"/>
    <property type="resolution" value="3.10 A"/>
    <property type="chains" value="B/F=1-561"/>
</dbReference>
<dbReference type="PDB" id="8QOF">
    <property type="method" value="EM"/>
    <property type="resolution" value="3.30 A"/>
    <property type="chains" value="C/G=1-561"/>
</dbReference>
<dbReference type="PDB" id="8QOG">
    <property type="method" value="EM"/>
    <property type="resolution" value="3.10 A"/>
    <property type="chains" value="C=1-561"/>
</dbReference>
<dbReference type="PDBsum" id="8C80"/>
<dbReference type="PDBsum" id="8C81"/>
<dbReference type="PDBsum" id="8C82"/>
<dbReference type="PDBsum" id="8IAJ"/>
<dbReference type="PDBsum" id="8IAK"/>
<dbReference type="PDBsum" id="8IAM"/>
<dbReference type="PDBsum" id="8QOF"/>
<dbReference type="PDBsum" id="8QOG"/>
<dbReference type="EMDB" id="EMD-16467"/>
<dbReference type="EMDB" id="EMD-16468"/>
<dbReference type="EMDB" id="EMD-16469"/>
<dbReference type="EMDB" id="EMD-18536"/>
<dbReference type="EMDB" id="EMD-18537"/>
<dbReference type="EMDB" id="EMD-35304"/>
<dbReference type="EMDB" id="EMD-35306"/>
<dbReference type="EMDB" id="EMD-35310"/>
<dbReference type="SMR" id="P40970"/>
<dbReference type="BioGRID" id="32117">
    <property type="interactions" value="640"/>
</dbReference>
<dbReference type="ComplexPortal" id="CPX-3158">
    <property type="entry name" value="SPOTS complex"/>
</dbReference>
<dbReference type="DIP" id="DIP-6658N"/>
<dbReference type="FunCoup" id="P40970">
    <property type="interactions" value="516"/>
</dbReference>
<dbReference type="IntAct" id="P40970">
    <property type="interactions" value="44"/>
</dbReference>
<dbReference type="MINT" id="P40970"/>
<dbReference type="STRING" id="4932.YDR062W"/>
<dbReference type="iPTMnet" id="P40970"/>
<dbReference type="PaxDb" id="4932-YDR062W"/>
<dbReference type="PeptideAtlas" id="P40970"/>
<dbReference type="EnsemblFungi" id="YDR062W_mRNA">
    <property type="protein sequence ID" value="YDR062W"/>
    <property type="gene ID" value="YDR062W"/>
</dbReference>
<dbReference type="GeneID" id="851634"/>
<dbReference type="KEGG" id="sce:YDR062W"/>
<dbReference type="AGR" id="SGD:S000002469"/>
<dbReference type="SGD" id="S000002469">
    <property type="gene designation" value="LCB2"/>
</dbReference>
<dbReference type="VEuPathDB" id="FungiDB:YDR062W"/>
<dbReference type="eggNOG" id="KOG1357">
    <property type="taxonomic scope" value="Eukaryota"/>
</dbReference>
<dbReference type="GeneTree" id="ENSGT00940000168104"/>
<dbReference type="HOGENOM" id="CLU_015846_7_2_1"/>
<dbReference type="InParanoid" id="P40970"/>
<dbReference type="OMA" id="QPRANGC"/>
<dbReference type="OrthoDB" id="65434at2759"/>
<dbReference type="BioCyc" id="MetaCyc:YDR062W-MONOMER"/>
<dbReference type="BioCyc" id="YEAST:YDR062W-MONOMER"/>
<dbReference type="UniPathway" id="UPA00222"/>
<dbReference type="BioGRID-ORCS" id="851634">
    <property type="hits" value="0 hits in 10 CRISPR screens"/>
</dbReference>
<dbReference type="PRO" id="PR:P40970"/>
<dbReference type="Proteomes" id="UP000002311">
    <property type="component" value="Chromosome IV"/>
</dbReference>
<dbReference type="RNAct" id="P40970">
    <property type="molecule type" value="protein"/>
</dbReference>
<dbReference type="GO" id="GO:0005783">
    <property type="term" value="C:endoplasmic reticulum"/>
    <property type="evidence" value="ECO:0007005"/>
    <property type="project" value="SGD"/>
</dbReference>
<dbReference type="GO" id="GO:0016020">
    <property type="term" value="C:membrane"/>
    <property type="evidence" value="ECO:0007669"/>
    <property type="project" value="UniProtKB-SubCell"/>
</dbReference>
<dbReference type="GO" id="GO:0017059">
    <property type="term" value="C:serine palmitoyltransferase complex"/>
    <property type="evidence" value="ECO:0000314"/>
    <property type="project" value="UniProtKB"/>
</dbReference>
<dbReference type="GO" id="GO:0030170">
    <property type="term" value="F:pyridoxal phosphate binding"/>
    <property type="evidence" value="ECO:0007669"/>
    <property type="project" value="InterPro"/>
</dbReference>
<dbReference type="GO" id="GO:0004758">
    <property type="term" value="F:serine C-palmitoyltransferase activity"/>
    <property type="evidence" value="ECO:0000315"/>
    <property type="project" value="SGD"/>
</dbReference>
<dbReference type="GO" id="GO:0046513">
    <property type="term" value="P:ceramide biosynthetic process"/>
    <property type="evidence" value="ECO:0000318"/>
    <property type="project" value="GO_Central"/>
</dbReference>
<dbReference type="GO" id="GO:0090156">
    <property type="term" value="P:intracellular sphingolipid homeostasis"/>
    <property type="evidence" value="ECO:0000303"/>
    <property type="project" value="ComplexPortal"/>
</dbReference>
<dbReference type="GO" id="GO:0030148">
    <property type="term" value="P:sphingolipid biosynthetic process"/>
    <property type="evidence" value="ECO:0000315"/>
    <property type="project" value="SGD"/>
</dbReference>
<dbReference type="GO" id="GO:0046512">
    <property type="term" value="P:sphingosine biosynthetic process"/>
    <property type="evidence" value="ECO:0000318"/>
    <property type="project" value="GO_Central"/>
</dbReference>
<dbReference type="CDD" id="cd06454">
    <property type="entry name" value="KBL_like"/>
    <property type="match status" value="1"/>
</dbReference>
<dbReference type="FunFam" id="3.40.640.10:FF:000047">
    <property type="entry name" value="serine palmitoyltransferase 2 isoform X1"/>
    <property type="match status" value="1"/>
</dbReference>
<dbReference type="Gene3D" id="3.90.1150.10">
    <property type="entry name" value="Aspartate Aminotransferase, domain 1"/>
    <property type="match status" value="1"/>
</dbReference>
<dbReference type="Gene3D" id="3.40.640.10">
    <property type="entry name" value="Type I PLP-dependent aspartate aminotransferase-like (Major domain)"/>
    <property type="match status" value="1"/>
</dbReference>
<dbReference type="InterPro" id="IPR001917">
    <property type="entry name" value="Aminotrans_II_pyridoxalP_BS"/>
</dbReference>
<dbReference type="InterPro" id="IPR004839">
    <property type="entry name" value="Aminotransferase_I/II_large"/>
</dbReference>
<dbReference type="InterPro" id="IPR050087">
    <property type="entry name" value="AON_synthase_class-II"/>
</dbReference>
<dbReference type="InterPro" id="IPR015424">
    <property type="entry name" value="PyrdxlP-dep_Trfase"/>
</dbReference>
<dbReference type="InterPro" id="IPR015421">
    <property type="entry name" value="PyrdxlP-dep_Trfase_major"/>
</dbReference>
<dbReference type="InterPro" id="IPR015422">
    <property type="entry name" value="PyrdxlP-dep_Trfase_small"/>
</dbReference>
<dbReference type="PANTHER" id="PTHR13693">
    <property type="entry name" value="CLASS II AMINOTRANSFERASE/8-AMINO-7-OXONONANOATE SYNTHASE"/>
    <property type="match status" value="1"/>
</dbReference>
<dbReference type="PANTHER" id="PTHR13693:SF3">
    <property type="entry name" value="LD36009P"/>
    <property type="match status" value="1"/>
</dbReference>
<dbReference type="Pfam" id="PF00155">
    <property type="entry name" value="Aminotran_1_2"/>
    <property type="match status" value="1"/>
</dbReference>
<dbReference type="SUPFAM" id="SSF53383">
    <property type="entry name" value="PLP-dependent transferases"/>
    <property type="match status" value="1"/>
</dbReference>
<dbReference type="PROSITE" id="PS00599">
    <property type="entry name" value="AA_TRANSFER_CLASS_2"/>
    <property type="match status" value="1"/>
</dbReference>
<keyword id="KW-0002">3D-structure</keyword>
<keyword id="KW-0012">Acyltransferase</keyword>
<keyword id="KW-0963">Cytoplasm</keyword>
<keyword id="KW-0256">Endoplasmic reticulum</keyword>
<keyword id="KW-0443">Lipid metabolism</keyword>
<keyword id="KW-0472">Membrane</keyword>
<keyword id="KW-0663">Pyridoxal phosphate</keyword>
<keyword id="KW-1185">Reference proteome</keyword>
<keyword id="KW-0746">Sphingolipid metabolism</keyword>
<keyword id="KW-0808">Transferase</keyword>
<keyword id="KW-0812">Transmembrane</keyword>
<keyword id="KW-1133">Transmembrane helix</keyword>
<proteinExistence type="evidence at protein level"/>
<reference key="1">
    <citation type="journal article" date="1994" name="J. Biol. Chem.">
        <title>Suppressors of the Ca(2+)-sensitive yeast mutant (csg2) identify genes involved in sphingolipid biosynthesis. Cloning and characterization of SCS1, a gene required for serine palmitoyltransferase activity.</title>
        <authorList>
            <person name="Zhao C."/>
            <person name="Beeler T."/>
            <person name="Dunn T."/>
        </authorList>
    </citation>
    <scope>NUCLEOTIDE SEQUENCE [GENOMIC DNA]</scope>
    <scope>ENZYME ACTIVITY</scope>
</reference>
<reference key="2">
    <citation type="journal article" date="1994" name="Proc. Natl. Acad. Sci. U.S.A.">
        <title>The LCB2 gene of Saccharomyces and the related LCB1 gene encode subunits of serine palmitoyltransferase, the initial enzyme in sphingolipid synthesis.</title>
        <authorList>
            <person name="Nagiec M.M."/>
            <person name="Baltisberger J.A."/>
            <person name="Wells G.B."/>
            <person name="Lester R.L."/>
            <person name="Dickson R.C."/>
        </authorList>
    </citation>
    <scope>NUCLEOTIDE SEQUENCE [GENOMIC DNA]</scope>
    <scope>ENZYME ACTIVITY</scope>
    <scope>SUBUNIT</scope>
    <source>
        <strain>ATCC 26109 / X2180</strain>
    </source>
</reference>
<reference key="3">
    <citation type="journal article" date="1996" name="Yeast">
        <title>Nucleotide sequence analysis of a 32,500 bp region of the right arm of Saccharomyces cerevisiae chromosome IV.</title>
        <authorList>
            <person name="Brandt P."/>
            <person name="Ramlow S."/>
            <person name="Otto B."/>
            <person name="Bloecker H."/>
        </authorList>
    </citation>
    <scope>NUCLEOTIDE SEQUENCE [GENOMIC DNA]</scope>
    <source>
        <strain>ATCC 204508 / S288c</strain>
    </source>
</reference>
<reference key="4">
    <citation type="journal article" date="1997" name="Nature">
        <title>The nucleotide sequence of Saccharomyces cerevisiae chromosome IV.</title>
        <authorList>
            <person name="Jacq C."/>
            <person name="Alt-Moerbe J."/>
            <person name="Andre B."/>
            <person name="Arnold W."/>
            <person name="Bahr A."/>
            <person name="Ballesta J.P.G."/>
            <person name="Bargues M."/>
            <person name="Baron L."/>
            <person name="Becker A."/>
            <person name="Biteau N."/>
            <person name="Bloecker H."/>
            <person name="Blugeon C."/>
            <person name="Boskovic J."/>
            <person name="Brandt P."/>
            <person name="Brueckner M."/>
            <person name="Buitrago M.J."/>
            <person name="Coster F."/>
            <person name="Delaveau T."/>
            <person name="del Rey F."/>
            <person name="Dujon B."/>
            <person name="Eide L.G."/>
            <person name="Garcia-Cantalejo J.M."/>
            <person name="Goffeau A."/>
            <person name="Gomez-Peris A."/>
            <person name="Granotier C."/>
            <person name="Hanemann V."/>
            <person name="Hankeln T."/>
            <person name="Hoheisel J.D."/>
            <person name="Jaeger W."/>
            <person name="Jimenez A."/>
            <person name="Jonniaux J.-L."/>
            <person name="Kraemer C."/>
            <person name="Kuester H."/>
            <person name="Laamanen P."/>
            <person name="Legros Y."/>
            <person name="Louis E.J."/>
            <person name="Moeller-Rieker S."/>
            <person name="Monnet A."/>
            <person name="Moro M."/>
            <person name="Mueller-Auer S."/>
            <person name="Nussbaumer B."/>
            <person name="Paricio N."/>
            <person name="Paulin L."/>
            <person name="Perea J."/>
            <person name="Perez-Alonso M."/>
            <person name="Perez-Ortin J.E."/>
            <person name="Pohl T.M."/>
            <person name="Prydz H."/>
            <person name="Purnelle B."/>
            <person name="Rasmussen S.W."/>
            <person name="Remacha M.A."/>
            <person name="Revuelta J.L."/>
            <person name="Rieger M."/>
            <person name="Salom D."/>
            <person name="Saluz H.P."/>
            <person name="Saiz J.E."/>
            <person name="Saren A.-M."/>
            <person name="Schaefer M."/>
            <person name="Scharfe M."/>
            <person name="Schmidt E.R."/>
            <person name="Schneider C."/>
            <person name="Scholler P."/>
            <person name="Schwarz S."/>
            <person name="Soler-Mira A."/>
            <person name="Urrestarazu L.A."/>
            <person name="Verhasselt P."/>
            <person name="Vissers S."/>
            <person name="Voet M."/>
            <person name="Volckaert G."/>
            <person name="Wagner G."/>
            <person name="Wambutt R."/>
            <person name="Wedler E."/>
            <person name="Wedler H."/>
            <person name="Woelfl S."/>
            <person name="Harris D.E."/>
            <person name="Bowman S."/>
            <person name="Brown D."/>
            <person name="Churcher C.M."/>
            <person name="Connor R."/>
            <person name="Dedman K."/>
            <person name="Gentles S."/>
            <person name="Hamlin N."/>
            <person name="Hunt S."/>
            <person name="Jones L."/>
            <person name="McDonald S."/>
            <person name="Murphy L.D."/>
            <person name="Niblett D."/>
            <person name="Odell C."/>
            <person name="Oliver K."/>
            <person name="Rajandream M.A."/>
            <person name="Richards C."/>
            <person name="Shore L."/>
            <person name="Walsh S.V."/>
            <person name="Barrell B.G."/>
            <person name="Dietrich F.S."/>
            <person name="Mulligan J.T."/>
            <person name="Allen E."/>
            <person name="Araujo R."/>
            <person name="Aviles E."/>
            <person name="Berno A."/>
            <person name="Carpenter J."/>
            <person name="Chen E."/>
            <person name="Cherry J.M."/>
            <person name="Chung E."/>
            <person name="Duncan M."/>
            <person name="Hunicke-Smith S."/>
            <person name="Hyman R.W."/>
            <person name="Komp C."/>
            <person name="Lashkari D."/>
            <person name="Lew H."/>
            <person name="Lin D."/>
            <person name="Mosedale D."/>
            <person name="Nakahara K."/>
            <person name="Namath A."/>
            <person name="Oefner P."/>
            <person name="Oh C."/>
            <person name="Petel F.X."/>
            <person name="Roberts D."/>
            <person name="Schramm S."/>
            <person name="Schroeder M."/>
            <person name="Shogren T."/>
            <person name="Shroff N."/>
            <person name="Winant A."/>
            <person name="Yelton M.A."/>
            <person name="Botstein D."/>
            <person name="Davis R.W."/>
            <person name="Johnston M."/>
            <person name="Andrews S."/>
            <person name="Brinkman R."/>
            <person name="Cooper J."/>
            <person name="Ding H."/>
            <person name="Du Z."/>
            <person name="Favello A."/>
            <person name="Fulton L."/>
            <person name="Gattung S."/>
            <person name="Greco T."/>
            <person name="Hallsworth K."/>
            <person name="Hawkins J."/>
            <person name="Hillier L.W."/>
            <person name="Jier M."/>
            <person name="Johnson D."/>
            <person name="Johnston L."/>
            <person name="Kirsten J."/>
            <person name="Kucaba T."/>
            <person name="Langston Y."/>
            <person name="Latreille P."/>
            <person name="Le T."/>
            <person name="Mardis E."/>
            <person name="Menezes S."/>
            <person name="Miller N."/>
            <person name="Nhan M."/>
            <person name="Pauley A."/>
            <person name="Peluso D."/>
            <person name="Rifkin L."/>
            <person name="Riles L."/>
            <person name="Taich A."/>
            <person name="Trevaskis E."/>
            <person name="Vignati D."/>
            <person name="Wilcox L."/>
            <person name="Wohldman P."/>
            <person name="Vaudin M."/>
            <person name="Wilson R."/>
            <person name="Waterston R."/>
            <person name="Albermann K."/>
            <person name="Hani J."/>
            <person name="Heumann K."/>
            <person name="Kleine K."/>
            <person name="Mewes H.-W."/>
            <person name="Zollner A."/>
            <person name="Zaccaria P."/>
        </authorList>
    </citation>
    <scope>NUCLEOTIDE SEQUENCE [LARGE SCALE GENOMIC DNA]</scope>
    <source>
        <strain>ATCC 204508 / S288c</strain>
    </source>
</reference>
<reference key="5">
    <citation type="journal article" date="2014" name="G3 (Bethesda)">
        <title>The reference genome sequence of Saccharomyces cerevisiae: Then and now.</title>
        <authorList>
            <person name="Engel S.R."/>
            <person name="Dietrich F.S."/>
            <person name="Fisk D.G."/>
            <person name="Binkley G."/>
            <person name="Balakrishnan R."/>
            <person name="Costanzo M.C."/>
            <person name="Dwight S.S."/>
            <person name="Hitz B.C."/>
            <person name="Karra K."/>
            <person name="Nash R.S."/>
            <person name="Weng S."/>
            <person name="Wong E.D."/>
            <person name="Lloyd P."/>
            <person name="Skrzypek M.S."/>
            <person name="Miyasato S.R."/>
            <person name="Simison M."/>
            <person name="Cherry J.M."/>
        </authorList>
    </citation>
    <scope>GENOME REANNOTATION</scope>
    <source>
        <strain>ATCC 204508 / S288c</strain>
    </source>
</reference>
<reference key="6">
    <citation type="journal article" date="2007" name="Genome Res.">
        <title>Approaching a complete repository of sequence-verified protein-encoding clones for Saccharomyces cerevisiae.</title>
        <authorList>
            <person name="Hu Y."/>
            <person name="Rolfs A."/>
            <person name="Bhullar B."/>
            <person name="Murthy T.V.S."/>
            <person name="Zhu C."/>
            <person name="Berger M.F."/>
            <person name="Camargo A.A."/>
            <person name="Kelley F."/>
            <person name="McCarron S."/>
            <person name="Jepson D."/>
            <person name="Richardson A."/>
            <person name="Raphael J."/>
            <person name="Moreira D."/>
            <person name="Taycher E."/>
            <person name="Zuo D."/>
            <person name="Mohr S."/>
            <person name="Kane M.F."/>
            <person name="Williamson J."/>
            <person name="Simpson A.J.G."/>
            <person name="Bulyk M.L."/>
            <person name="Harlow E."/>
            <person name="Marsischky G."/>
            <person name="Kolodner R.D."/>
            <person name="LaBaer J."/>
        </authorList>
    </citation>
    <scope>NUCLEOTIDE SEQUENCE [GENOMIC DNA]</scope>
    <source>
        <strain>ATCC 204508 / S288c</strain>
    </source>
</reference>
<reference key="7">
    <citation type="journal article" date="2000" name="J. Biol. Chem.">
        <title>Tsc3p is an 80-amino acid protein associated with serine palmitoyltransferase and required for optimal enzyme activity.</title>
        <authorList>
            <person name="Gable K."/>
            <person name="Slife H."/>
            <person name="Bacikova D."/>
            <person name="Monaghan E."/>
            <person name="Dunn T.M."/>
        </authorList>
    </citation>
    <scope>ENZYME ACTIVITY</scope>
    <scope>INTERACTION WITH LCB1 AND TSC3</scope>
    <scope>SUBCELLULAR LOCATION</scope>
</reference>
<reference key="8">
    <citation type="journal article" date="2002" name="J. Biol. Chem.">
        <title>Mutations in the yeast LCB1 and LCB2 genes, including those corresponding to the hereditary sensory neuropathy type I mutations, dominantly inactivate serine palmitoyltransferase.</title>
        <authorList>
            <person name="Gable K."/>
            <person name="Han G."/>
            <person name="Monaghan E."/>
            <person name="Bacikova D."/>
            <person name="Natarajan M."/>
            <person name="Williams R."/>
            <person name="Dunn T.M."/>
        </authorList>
    </citation>
    <scope>ENZYME ACTIVITY</scope>
    <scope>INTERACTION WITH LCB1</scope>
    <scope>SUBUNIT</scope>
    <scope>MUTAGENESIS OF HIS-334 AND LYS-366</scope>
</reference>
<reference key="9">
    <citation type="journal article" date="2003" name="Nature">
        <title>Global analysis of protein localization in budding yeast.</title>
        <authorList>
            <person name="Huh W.-K."/>
            <person name="Falvo J.V."/>
            <person name="Gerke L.C."/>
            <person name="Carroll A.S."/>
            <person name="Howson R.W."/>
            <person name="Weissman J.S."/>
            <person name="O'Shea E.K."/>
        </authorList>
    </citation>
    <scope>SUBCELLULAR LOCATION [LARGE SCALE ANALYSIS]</scope>
</reference>
<reference key="10">
    <citation type="journal article" date="2003" name="Nature">
        <title>Global analysis of protein expression in yeast.</title>
        <authorList>
            <person name="Ghaemmaghami S."/>
            <person name="Huh W.-K."/>
            <person name="Bower K."/>
            <person name="Howson R.W."/>
            <person name="Belle A."/>
            <person name="Dephoure N."/>
            <person name="O'Shea E.K."/>
            <person name="Weissman J.S."/>
        </authorList>
    </citation>
    <scope>LEVEL OF PROTEIN EXPRESSION [LARGE SCALE ANALYSIS]</scope>
</reference>
<reference key="11">
    <citation type="journal article" date="2004" name="J. Biol. Chem.">
        <title>The topology of the Lcb1p subunit of yeast serine palmitoyltransferase.</title>
        <authorList>
            <person name="Han G."/>
            <person name="Gable K."/>
            <person name="Yan L."/>
            <person name="Natarajan M."/>
            <person name="Krishnamurthy J."/>
            <person name="Gupta S.D."/>
            <person name="Borovitskaya A."/>
            <person name="Harmon J.M."/>
            <person name="Dunn T.M."/>
        </authorList>
    </citation>
    <scope>ENZYME ACTIVITY</scope>
    <scope>INTERACTION WITH LCB1</scope>
    <scope>SUBCELLULAR LOCATION</scope>
</reference>
<reference key="12">
    <citation type="journal article" date="2010" name="Nature">
        <title>Orm family proteins mediate sphingolipid homeostasis.</title>
        <authorList>
            <person name="Breslow D.K."/>
            <person name="Collins S.R."/>
            <person name="Bodenmiller B."/>
            <person name="Aebersold R."/>
            <person name="Simons K."/>
            <person name="Shevchenko A."/>
            <person name="Ejsing C.S."/>
            <person name="Weissman J.S."/>
        </authorList>
    </citation>
    <scope>IDENTIFICATION IN THE SPOTS COMPLEX</scope>
</reference>
<gene>
    <name type="primary">LCB2</name>
    <name type="synonym">SCS1</name>
    <name type="synonym">TSC1</name>
    <name type="ordered locus">YDR062W</name>
    <name type="ORF">D4246</name>
    <name type="ORF">YD9609.16</name>
</gene>
<comment type="function">
    <text>Catalytic subunit of serine palmitoyltransferase (SPT), which catalyzes the committed step in the synthesis of sphingolipids, the condensation of serine with palmitoyl CoA to form the long chain base 3-ketosphinganine.</text>
</comment>
<comment type="catalytic activity">
    <reaction evidence="3 4 6 8 9">
        <text>L-serine + hexadecanoyl-CoA + H(+) = 3-oxosphinganine + CO2 + CoA</text>
        <dbReference type="Rhea" id="RHEA:14761"/>
        <dbReference type="ChEBI" id="CHEBI:15378"/>
        <dbReference type="ChEBI" id="CHEBI:16526"/>
        <dbReference type="ChEBI" id="CHEBI:33384"/>
        <dbReference type="ChEBI" id="CHEBI:57287"/>
        <dbReference type="ChEBI" id="CHEBI:57379"/>
        <dbReference type="ChEBI" id="CHEBI:58299"/>
        <dbReference type="EC" id="2.3.1.50"/>
    </reaction>
</comment>
<comment type="cofactor">
    <cofactor>
        <name>pyridoxal 5'-phosphate</name>
        <dbReference type="ChEBI" id="CHEBI:597326"/>
    </cofactor>
</comment>
<comment type="pathway">
    <text>Lipid metabolism; sphingolipid metabolism.</text>
</comment>
<comment type="subunit">
    <text evidence="3 4 6 7 8">LCB1 and LCB2 encode essential subunits of the enzyme and form a heterodimer. Component of the SPOTS complex, at least composed of LCB1/2 (LCB1 and/or LCB2), ORM1/2 (ORM1 and/or ORM2), SAC1 and TSC3. Interacts with LCB1 and TSC3.</text>
</comment>
<comment type="interaction">
    <interactant intactId="EBI-10067">
        <id>P40970</id>
    </interactant>
    <interactant intactId="EBI-10059">
        <id>P25045</id>
        <label>LCB1</label>
    </interactant>
    <organismsDiffer>false</organismsDiffer>
    <experiments>10</experiments>
</comment>
<comment type="subcellular location">
    <subcellularLocation>
        <location>Cytoplasm</location>
    </subcellularLocation>
    <subcellularLocation>
        <location>Endoplasmic reticulum</location>
    </subcellularLocation>
    <subcellularLocation>
        <location evidence="10">Membrane</location>
        <topology evidence="10">Multi-pass membrane protein</topology>
    </subcellularLocation>
</comment>
<comment type="miscellaneous">
    <text evidence="5">Present with 54500 molecules/cell in log phase SD medium.</text>
</comment>
<comment type="similarity">
    <text evidence="10">Belongs to the class-II pyridoxal-phosphate-dependent aminotransferase family.</text>
</comment>
<protein>
    <recommendedName>
        <fullName>Serine palmitoyltransferase 2</fullName>
        <shortName>SPT 2</shortName>
        <ecNumber>2.3.1.50</ecNumber>
    </recommendedName>
    <alternativeName>
        <fullName>Long chain base biosynthesis protein 2</fullName>
    </alternativeName>
</protein>
<feature type="chain" id="PRO_0000163862" description="Serine palmitoyltransferase 2">
    <location>
        <begin position="1"/>
        <end position="561"/>
    </location>
</feature>
<feature type="transmembrane region" description="Helical" evidence="2">
    <location>
        <begin position="57"/>
        <end position="77"/>
    </location>
</feature>
<feature type="transmembrane region" description="Helical" evidence="2">
    <location>
        <begin position="443"/>
        <end position="463"/>
    </location>
</feature>
<feature type="modified residue" description="N6-(pyridoxal phosphate)lysine" evidence="1">
    <location>
        <position position="366"/>
    </location>
</feature>
<feature type="mutagenesis site" description="Loss of activity. No effect on interaction with LCB1." evidence="4">
    <original>H</original>
    <variation>F</variation>
    <location>
        <position position="334"/>
    </location>
</feature>
<feature type="mutagenesis site" description="Loss of activity. No effect on interaction with LCB1." evidence="4">
    <original>K</original>
    <variation>T</variation>
    <location>
        <position position="366"/>
    </location>
</feature>
<feature type="sequence conflict" description="In Ref. 1; AAA53669." evidence="10" ref="1">
    <original>AN</original>
    <variation>PH</variation>
    <location>
        <begin position="5"/>
        <end position="6"/>
    </location>
</feature>
<feature type="sequence conflict" description="In Ref. 1; AAA53669." evidence="10" ref="1">
    <original>Q</original>
    <variation>P</variation>
    <location>
        <position position="23"/>
    </location>
</feature>
<feature type="sequence conflict" description="In Ref. 6; AAU09688." evidence="10" ref="6">
    <original>F</original>
    <variation>S</variation>
    <location>
        <position position="236"/>
    </location>
</feature>
<feature type="sequence conflict" description="In Ref. 1; AAA53669." evidence="10" ref="1">
    <original>Q</original>
    <variation>K</variation>
    <location>
        <position position="441"/>
    </location>
</feature>
<organism>
    <name type="scientific">Saccharomyces cerevisiae (strain ATCC 204508 / S288c)</name>
    <name type="common">Baker's yeast</name>
    <dbReference type="NCBI Taxonomy" id="559292"/>
    <lineage>
        <taxon>Eukaryota</taxon>
        <taxon>Fungi</taxon>
        <taxon>Dikarya</taxon>
        <taxon>Ascomycota</taxon>
        <taxon>Saccharomycotina</taxon>
        <taxon>Saccharomycetes</taxon>
        <taxon>Saccharomycetales</taxon>
        <taxon>Saccharomycetaceae</taxon>
        <taxon>Saccharomyces</taxon>
    </lineage>
</organism>
<accession>P40970</accession>
<accession>D6VS48</accession>
<accession>Q66RG8</accession>